<keyword id="KW-1003">Cell membrane</keyword>
<keyword id="KW-0325">Glycoprotein</keyword>
<keyword id="KW-0378">Hydrolase</keyword>
<keyword id="KW-0442">Lipid degradation</keyword>
<keyword id="KW-0443">Lipid metabolism</keyword>
<keyword id="KW-0472">Membrane</keyword>
<keyword id="KW-1185">Reference proteome</keyword>
<keyword id="KW-0719">Serine esterase</keyword>
<keyword id="KW-0735">Signal-anchor</keyword>
<keyword id="KW-0812">Transmembrane</keyword>
<keyword id="KW-1133">Transmembrane helix</keyword>
<sequence>MNAMMETSELPAVFDGVKLAAVAAVLYVIVRCLNLKSPTAPPDLYFQDSGLSRFLLKSCPLLTKEYIPPLIWGKSGHIQTALYGKMGRVRSPHPYGHRKFITMSDGATSTFDLFEPLAEHCVGDDITMVICPGIANHSEKQYIRTFVDYAQKNGYRCAVLNHLGALPNIELTSPRMFTYGCTWEFGAMVNYIKKTYPLTQLVVVGFSLGGNIVCKYLGETQANQEKVLCCVSVCQGYSALRAQETFMQWDQCRRFYNFLMADNMKKIILSHRQALFGDHVKKPQSLEDTDLSRLYTATSLMQIDDNVMRKFHGYNSLKEYYEEESCMRYLHRIYVPLMLVNAADDPLVHESLLAIPKSLSEKRENVMFVLPLHGGHLGFFEGSVLFPEPLTWMDKLVVEYANAICQWERNKSQCSDTELVEADLE</sequence>
<feature type="chain" id="PRO_0000280780" description="Monoacylglycerol lipase ABHD2">
    <location>
        <begin position="1"/>
        <end position="425"/>
    </location>
</feature>
<feature type="topological domain" description="Cytoplasmic" evidence="6">
    <location>
        <begin position="1"/>
        <end position="9"/>
    </location>
</feature>
<feature type="transmembrane region" description="Helical; Signal-anchor for type II membrane protein" evidence="4">
    <location>
        <begin position="10"/>
        <end position="30"/>
    </location>
</feature>
<feature type="topological domain" description="Extracellular" evidence="6">
    <location>
        <begin position="31"/>
        <end position="425"/>
    </location>
</feature>
<feature type="domain" description="AB hydrolase-1" evidence="4">
    <location>
        <begin position="128"/>
        <end position="382"/>
    </location>
</feature>
<feature type="active site" description="Nucleophile" evidence="2">
    <location>
        <position position="207"/>
    </location>
</feature>
<feature type="active site" description="Charge relay system" evidence="2">
    <location>
        <position position="345"/>
    </location>
</feature>
<feature type="active site" description="Charge relay system" evidence="2">
    <location>
        <position position="376"/>
    </location>
</feature>
<feature type="glycosylation site" description="N-linked (GlcNAc...) asparagine" evidence="5">
    <location>
        <position position="136"/>
    </location>
</feature>
<feature type="glycosylation site" description="N-linked (GlcNAc...) asparagine" evidence="5">
    <location>
        <position position="410"/>
    </location>
</feature>
<evidence type="ECO:0000250" key="1">
    <source>
        <dbReference type="UniProtKB" id="P08910"/>
    </source>
</evidence>
<evidence type="ECO:0000250" key="2">
    <source>
        <dbReference type="UniProtKB" id="Q86WA6"/>
    </source>
</evidence>
<evidence type="ECO:0000250" key="3">
    <source>
        <dbReference type="UniProtKB" id="Q9QXM0"/>
    </source>
</evidence>
<evidence type="ECO:0000255" key="4"/>
<evidence type="ECO:0000255" key="5">
    <source>
        <dbReference type="PROSITE-ProRule" id="PRU00498"/>
    </source>
</evidence>
<evidence type="ECO:0000305" key="6"/>
<dbReference type="EC" id="3.1.1.23" evidence="1"/>
<dbReference type="EC" id="3.1.1.6" evidence="1"/>
<dbReference type="EC" id="3.1.1.79" evidence="1"/>
<dbReference type="EMBL" id="BT020727">
    <property type="protein sequence ID" value="AAX08744.1"/>
    <property type="molecule type" value="mRNA"/>
</dbReference>
<dbReference type="EMBL" id="BC146116">
    <property type="protein sequence ID" value="AAI46117.1"/>
    <property type="molecule type" value="mRNA"/>
</dbReference>
<dbReference type="RefSeq" id="NP_001015549.1">
    <property type="nucleotide sequence ID" value="NM_001015549.1"/>
</dbReference>
<dbReference type="FunCoup" id="Q5EA42">
    <property type="interactions" value="525"/>
</dbReference>
<dbReference type="STRING" id="9913.ENSBTAP00000026579"/>
<dbReference type="ESTHER" id="bovin-abhd2">
    <property type="family name" value="abh_upf0017"/>
</dbReference>
<dbReference type="GlyCosmos" id="Q5EA42">
    <property type="glycosylation" value="2 sites, No reported glycans"/>
</dbReference>
<dbReference type="GlyGen" id="Q5EA42">
    <property type="glycosylation" value="2 sites"/>
</dbReference>
<dbReference type="PaxDb" id="9913-ENSBTAP00000026579"/>
<dbReference type="Ensembl" id="ENSBTAT00000026579.4">
    <property type="protein sequence ID" value="ENSBTAP00000026579.3"/>
    <property type="gene ID" value="ENSBTAG00000019954.5"/>
</dbReference>
<dbReference type="GeneID" id="508717"/>
<dbReference type="KEGG" id="bta:508717"/>
<dbReference type="CTD" id="11057"/>
<dbReference type="VEuPathDB" id="HostDB:ENSBTAG00000019954"/>
<dbReference type="VGNC" id="VGNC:25500">
    <property type="gene designation" value="ABHD2"/>
</dbReference>
<dbReference type="eggNOG" id="KOG1838">
    <property type="taxonomic scope" value="Eukaryota"/>
</dbReference>
<dbReference type="GeneTree" id="ENSGT00950000182902"/>
<dbReference type="HOGENOM" id="CLU_032487_5_0_1"/>
<dbReference type="InParanoid" id="Q5EA42"/>
<dbReference type="OMA" id="HCTGEDV"/>
<dbReference type="OrthoDB" id="5954035at2759"/>
<dbReference type="TreeFam" id="TF313195"/>
<dbReference type="Proteomes" id="UP000009136">
    <property type="component" value="Chromosome 21"/>
</dbReference>
<dbReference type="Bgee" id="ENSBTAG00000019954">
    <property type="expression patterns" value="Expressed in neutrophil and 107 other cell types or tissues"/>
</dbReference>
<dbReference type="GO" id="GO:0036126">
    <property type="term" value="C:sperm flagellum"/>
    <property type="evidence" value="ECO:0000318"/>
    <property type="project" value="GO_Central"/>
</dbReference>
<dbReference type="GO" id="GO:0097524">
    <property type="term" value="C:sperm plasma membrane"/>
    <property type="evidence" value="ECO:0000318"/>
    <property type="project" value="GO_Central"/>
</dbReference>
<dbReference type="GO" id="GO:0008126">
    <property type="term" value="F:acetylesterase activity"/>
    <property type="evidence" value="ECO:0000250"/>
    <property type="project" value="UniProtKB"/>
</dbReference>
<dbReference type="GO" id="GO:0120516">
    <property type="term" value="F:diacylglycerol lipase activity"/>
    <property type="evidence" value="ECO:0000250"/>
    <property type="project" value="UniProtKB"/>
</dbReference>
<dbReference type="GO" id="GO:0042562">
    <property type="term" value="F:hormone binding"/>
    <property type="evidence" value="ECO:0000250"/>
    <property type="project" value="UniProtKB"/>
</dbReference>
<dbReference type="GO" id="GO:0047372">
    <property type="term" value="F:monoacylglycerol lipase activity"/>
    <property type="evidence" value="ECO:0000250"/>
    <property type="project" value="UniProtKB"/>
</dbReference>
<dbReference type="GO" id="GO:0003707">
    <property type="term" value="F:nuclear steroid receptor activity"/>
    <property type="evidence" value="ECO:0000250"/>
    <property type="project" value="UniProtKB"/>
</dbReference>
<dbReference type="GO" id="GO:0004806">
    <property type="term" value="F:triacylglycerol lipase activity"/>
    <property type="evidence" value="ECO:0007669"/>
    <property type="project" value="RHEA"/>
</dbReference>
<dbReference type="GO" id="GO:0046464">
    <property type="term" value="P:acylglycerol catabolic process"/>
    <property type="evidence" value="ECO:0000250"/>
    <property type="project" value="UniProtKB"/>
</dbReference>
<dbReference type="GO" id="GO:0051792">
    <property type="term" value="P:medium-chain fatty acid biosynthetic process"/>
    <property type="evidence" value="ECO:0000318"/>
    <property type="project" value="GO_Central"/>
</dbReference>
<dbReference type="GO" id="GO:0051793">
    <property type="term" value="P:medium-chain fatty acid catabolic process"/>
    <property type="evidence" value="ECO:0000318"/>
    <property type="project" value="GO_Central"/>
</dbReference>
<dbReference type="GO" id="GO:0030336">
    <property type="term" value="P:negative regulation of cell migration"/>
    <property type="evidence" value="ECO:0000250"/>
    <property type="project" value="AgBase"/>
</dbReference>
<dbReference type="GO" id="GO:0032570">
    <property type="term" value="P:response to progesterone"/>
    <property type="evidence" value="ECO:0000250"/>
    <property type="project" value="UniProtKB"/>
</dbReference>
<dbReference type="GO" id="GO:0009611">
    <property type="term" value="P:response to wounding"/>
    <property type="evidence" value="ECO:0000250"/>
    <property type="project" value="AgBase"/>
</dbReference>
<dbReference type="GO" id="GO:0048240">
    <property type="term" value="P:sperm capacitation"/>
    <property type="evidence" value="ECO:0000318"/>
    <property type="project" value="GO_Central"/>
</dbReference>
<dbReference type="GO" id="GO:0043401">
    <property type="term" value="P:steroid hormone receptor signaling pathway"/>
    <property type="evidence" value="ECO:0000250"/>
    <property type="project" value="UniProtKB"/>
</dbReference>
<dbReference type="FunFam" id="3.40.50.1820:FF:000053">
    <property type="entry name" value="Abhydrolase domain containing 2"/>
    <property type="match status" value="1"/>
</dbReference>
<dbReference type="Gene3D" id="3.40.50.1820">
    <property type="entry name" value="alpha/beta hydrolase"/>
    <property type="match status" value="1"/>
</dbReference>
<dbReference type="InterPro" id="IPR000073">
    <property type="entry name" value="AB_hydrolase_1"/>
</dbReference>
<dbReference type="InterPro" id="IPR000952">
    <property type="entry name" value="AB_hydrolase_4_CS"/>
</dbReference>
<dbReference type="InterPro" id="IPR050960">
    <property type="entry name" value="AB_hydrolase_4_sf"/>
</dbReference>
<dbReference type="InterPro" id="IPR029058">
    <property type="entry name" value="AB_hydrolase_fold"/>
</dbReference>
<dbReference type="InterPro" id="IPR012020">
    <property type="entry name" value="ABHD4"/>
</dbReference>
<dbReference type="PANTHER" id="PTHR10794">
    <property type="entry name" value="ABHYDROLASE DOMAIN-CONTAINING PROTEIN"/>
    <property type="match status" value="1"/>
</dbReference>
<dbReference type="PANTHER" id="PTHR10794:SF45">
    <property type="entry name" value="MONOACYLGLYCEROL LIPASE ABHD2"/>
    <property type="match status" value="1"/>
</dbReference>
<dbReference type="Pfam" id="PF00561">
    <property type="entry name" value="Abhydrolase_1"/>
    <property type="match status" value="1"/>
</dbReference>
<dbReference type="PIRSF" id="PIRSF005211">
    <property type="entry name" value="Ab_hydro_YheT"/>
    <property type="match status" value="1"/>
</dbReference>
<dbReference type="SUPFAM" id="SSF53474">
    <property type="entry name" value="alpha/beta-Hydrolases"/>
    <property type="match status" value="1"/>
</dbReference>
<dbReference type="PROSITE" id="PS01133">
    <property type="entry name" value="UPF0017"/>
    <property type="match status" value="1"/>
</dbReference>
<accession>Q5EA42</accession>
<accession>A6H753</accession>
<gene>
    <name type="primary">ABHD2</name>
</gene>
<reference key="1">
    <citation type="journal article" date="2005" name="BMC Genomics">
        <title>Characterization of 954 bovine full-CDS cDNA sequences.</title>
        <authorList>
            <person name="Harhay G.P."/>
            <person name="Sonstegard T.S."/>
            <person name="Keele J.W."/>
            <person name="Heaton M.P."/>
            <person name="Clawson M.L."/>
            <person name="Snelling W.M."/>
            <person name="Wiedmann R.T."/>
            <person name="Van Tassell C.P."/>
            <person name="Smith T.P.L."/>
        </authorList>
    </citation>
    <scope>NUCLEOTIDE SEQUENCE [LARGE SCALE MRNA]</scope>
</reference>
<reference key="2">
    <citation type="submission" date="2007-06" db="EMBL/GenBank/DDBJ databases">
        <authorList>
            <consortium name="NIH - Mammalian Gene Collection (MGC) project"/>
        </authorList>
    </citation>
    <scope>NUCLEOTIDE SEQUENCE [LARGE SCALE MRNA]</scope>
    <source>
        <strain>Crossbred X Angus</strain>
        <tissue>Liver</tissue>
    </source>
</reference>
<name>ABHD2_BOVIN</name>
<proteinExistence type="evidence at transcript level"/>
<comment type="function">
    <text evidence="1 3">Progesterone-dependent acylglycerol lipase that catalyzes hydrolysis of endocannabinoid arachidonoylglycerol (AG) from cell membrane. Acts as a progesterone receptor: progesterone-binding activates the acylglycerol lipase activity, mediating degradation of 1-arachidonoylglycerol (1AG) and 2-arachidonoylglycerol (2AG) to glycerol and arachidonic acid (AA). Also displays an ester hydrolase activity against acetyl ester, butanoate ester and hexadecanoate ester. Plays a key role in sperm capacitation in response to progesterone by mediating degradation of 2AG, an inhibitor of the sperm calcium channel CatSper, leading to calcium influx via CatSper and sperm activation (By similarity). May also play a role in smooth muscle cells migration (By similarity).</text>
</comment>
<comment type="catalytic activity">
    <reaction evidence="1">
        <text>Hydrolyzes glycerol monoesters of long-chain fatty acids.</text>
        <dbReference type="EC" id="3.1.1.23"/>
    </reaction>
</comment>
<comment type="catalytic activity">
    <reaction evidence="1">
        <text>an acetyl ester + H2O = an aliphatic alcohol + acetate + H(+)</text>
        <dbReference type="Rhea" id="RHEA:12957"/>
        <dbReference type="ChEBI" id="CHEBI:2571"/>
        <dbReference type="ChEBI" id="CHEBI:15377"/>
        <dbReference type="ChEBI" id="CHEBI:15378"/>
        <dbReference type="ChEBI" id="CHEBI:30089"/>
        <dbReference type="ChEBI" id="CHEBI:47622"/>
        <dbReference type="EC" id="3.1.1.6"/>
    </reaction>
    <physiologicalReaction direction="left-to-right" evidence="1">
        <dbReference type="Rhea" id="RHEA:12958"/>
    </physiologicalReaction>
</comment>
<comment type="catalytic activity">
    <reaction evidence="1">
        <text>a triacylglycerol + H2O = a diacylglycerol + a fatty acid + H(+)</text>
        <dbReference type="Rhea" id="RHEA:12044"/>
        <dbReference type="ChEBI" id="CHEBI:15377"/>
        <dbReference type="ChEBI" id="CHEBI:15378"/>
        <dbReference type="ChEBI" id="CHEBI:17855"/>
        <dbReference type="ChEBI" id="CHEBI:18035"/>
        <dbReference type="ChEBI" id="CHEBI:28868"/>
        <dbReference type="EC" id="3.1.1.79"/>
    </reaction>
    <physiologicalReaction direction="left-to-right" evidence="1">
        <dbReference type="Rhea" id="RHEA:12045"/>
    </physiologicalReaction>
</comment>
<comment type="catalytic activity">
    <reaction evidence="1">
        <text>2-(5Z,8Z,11Z,14Z-eicosatetraenoyl)-glycerol + H2O = glycerol + (5Z,8Z,11Z,14Z)-eicosatetraenoate + H(+)</text>
        <dbReference type="Rhea" id="RHEA:26132"/>
        <dbReference type="ChEBI" id="CHEBI:15377"/>
        <dbReference type="ChEBI" id="CHEBI:15378"/>
        <dbReference type="ChEBI" id="CHEBI:17754"/>
        <dbReference type="ChEBI" id="CHEBI:32395"/>
        <dbReference type="ChEBI" id="CHEBI:52392"/>
    </reaction>
    <physiologicalReaction direction="left-to-right" evidence="1">
        <dbReference type="Rhea" id="RHEA:26133"/>
    </physiologicalReaction>
</comment>
<comment type="catalytic activity">
    <reaction evidence="1">
        <text>a butanoate ester + H2O = an aliphatic alcohol + butanoate + H(+)</text>
        <dbReference type="Rhea" id="RHEA:47348"/>
        <dbReference type="ChEBI" id="CHEBI:2571"/>
        <dbReference type="ChEBI" id="CHEBI:15377"/>
        <dbReference type="ChEBI" id="CHEBI:15378"/>
        <dbReference type="ChEBI" id="CHEBI:17968"/>
        <dbReference type="ChEBI" id="CHEBI:50477"/>
    </reaction>
    <physiologicalReaction direction="left-to-right" evidence="1">
        <dbReference type="Rhea" id="RHEA:47349"/>
    </physiologicalReaction>
</comment>
<comment type="catalytic activity">
    <reaction evidence="1">
        <text>hexadecanoate ester + H2O = an aliphatic alcohol + hexadecanoate + H(+)</text>
        <dbReference type="Rhea" id="RHEA:47392"/>
        <dbReference type="ChEBI" id="CHEBI:2571"/>
        <dbReference type="ChEBI" id="CHEBI:7896"/>
        <dbReference type="ChEBI" id="CHEBI:15377"/>
        <dbReference type="ChEBI" id="CHEBI:15378"/>
        <dbReference type="ChEBI" id="CHEBI:25835"/>
    </reaction>
    <physiologicalReaction direction="left-to-right" evidence="1">
        <dbReference type="Rhea" id="RHEA:47393"/>
    </physiologicalReaction>
</comment>
<comment type="activity regulation">
    <text evidence="1">Acylglycerol lipase activity is activated upon binding to progesterone.</text>
</comment>
<comment type="subcellular location">
    <subcellularLocation>
        <location evidence="1">Cell membrane</location>
        <topology evidence="1">Single-pass type II membrane protein</topology>
    </subcellularLocation>
</comment>
<comment type="similarity">
    <text evidence="6">Belongs to the AB hydrolase superfamily. AB hydrolase 4 family.</text>
</comment>
<organism>
    <name type="scientific">Bos taurus</name>
    <name type="common">Bovine</name>
    <dbReference type="NCBI Taxonomy" id="9913"/>
    <lineage>
        <taxon>Eukaryota</taxon>
        <taxon>Metazoa</taxon>
        <taxon>Chordata</taxon>
        <taxon>Craniata</taxon>
        <taxon>Vertebrata</taxon>
        <taxon>Euteleostomi</taxon>
        <taxon>Mammalia</taxon>
        <taxon>Eutheria</taxon>
        <taxon>Laurasiatheria</taxon>
        <taxon>Artiodactyla</taxon>
        <taxon>Ruminantia</taxon>
        <taxon>Pecora</taxon>
        <taxon>Bovidae</taxon>
        <taxon>Bovinae</taxon>
        <taxon>Bos</taxon>
    </lineage>
</organism>
<protein>
    <recommendedName>
        <fullName evidence="6">Monoacylglycerol lipase ABHD2</fullName>
        <ecNumber evidence="1">3.1.1.23</ecNumber>
    </recommendedName>
    <alternativeName>
        <fullName evidence="6">2-arachidonoylglycerol hydrolase</fullName>
    </alternativeName>
    <alternativeName>
        <fullName evidence="6">Abhydrolase domain-containing protein 2</fullName>
    </alternativeName>
    <alternativeName>
        <fullName evidence="1">Acetylesterase</fullName>
        <ecNumber evidence="1">3.1.1.6</ecNumber>
    </alternativeName>
    <alternativeName>
        <fullName evidence="1">Triacylglycerol lipase</fullName>
        <ecNumber evidence="1">3.1.1.79</ecNumber>
    </alternativeName>
</protein>